<dbReference type="EMBL" id="L22020">
    <property type="protein sequence ID" value="AAA49284.1"/>
    <property type="molecule type" value="mRNA"/>
</dbReference>
<dbReference type="PIR" id="I50552">
    <property type="entry name" value="I50552"/>
</dbReference>
<dbReference type="SMR" id="P36976"/>
<dbReference type="GO" id="GO:0005737">
    <property type="term" value="C:cytoplasm"/>
    <property type="evidence" value="ECO:0000250"/>
    <property type="project" value="UniProtKB"/>
</dbReference>
<dbReference type="GO" id="GO:0016020">
    <property type="term" value="C:membrane"/>
    <property type="evidence" value="ECO:0000250"/>
    <property type="project" value="UniProtKB"/>
</dbReference>
<dbReference type="GO" id="GO:0043005">
    <property type="term" value="C:neuron projection"/>
    <property type="evidence" value="ECO:0007669"/>
    <property type="project" value="UniProtKB-KW"/>
</dbReference>
<dbReference type="GO" id="GO:0005886">
    <property type="term" value="C:plasma membrane"/>
    <property type="evidence" value="ECO:0007669"/>
    <property type="project" value="UniProtKB-SubCell"/>
</dbReference>
<dbReference type="GO" id="GO:0098793">
    <property type="term" value="C:presynapse"/>
    <property type="evidence" value="ECO:0007669"/>
    <property type="project" value="GOC"/>
</dbReference>
<dbReference type="GO" id="GO:0031201">
    <property type="term" value="C:SNARE complex"/>
    <property type="evidence" value="ECO:0000250"/>
    <property type="project" value="UniProtKB"/>
</dbReference>
<dbReference type="GO" id="GO:0005484">
    <property type="term" value="F:SNAP receptor activity"/>
    <property type="evidence" value="ECO:0007669"/>
    <property type="project" value="TreeGrafter"/>
</dbReference>
<dbReference type="GO" id="GO:0017075">
    <property type="term" value="F:syntaxin-1 binding"/>
    <property type="evidence" value="ECO:0007669"/>
    <property type="project" value="InterPro"/>
</dbReference>
<dbReference type="GO" id="GO:0005249">
    <property type="term" value="F:voltage-gated potassium channel activity"/>
    <property type="evidence" value="ECO:0007669"/>
    <property type="project" value="InterPro"/>
</dbReference>
<dbReference type="GO" id="GO:0031629">
    <property type="term" value="P:synaptic vesicle fusion to presynaptic active zone membrane"/>
    <property type="evidence" value="ECO:0007669"/>
    <property type="project" value="TreeGrafter"/>
</dbReference>
<dbReference type="GO" id="GO:0016082">
    <property type="term" value="P:synaptic vesicle priming"/>
    <property type="evidence" value="ECO:0007669"/>
    <property type="project" value="TreeGrafter"/>
</dbReference>
<dbReference type="CDD" id="cd15885">
    <property type="entry name" value="SNARE_SNAP25C"/>
    <property type="match status" value="1"/>
</dbReference>
<dbReference type="CDD" id="cd15894">
    <property type="entry name" value="SNARE_SNAP25N"/>
    <property type="match status" value="1"/>
</dbReference>
<dbReference type="FunFam" id="1.20.5.110:FF:000007">
    <property type="entry name" value="Synaptosomal-associated protein"/>
    <property type="match status" value="1"/>
</dbReference>
<dbReference type="FunFam" id="1.20.5.110:FF:000009">
    <property type="entry name" value="Synaptosomal-associated protein"/>
    <property type="match status" value="1"/>
</dbReference>
<dbReference type="Gene3D" id="1.20.5.110">
    <property type="match status" value="2"/>
</dbReference>
<dbReference type="InterPro" id="IPR000928">
    <property type="entry name" value="SNAP-25_dom"/>
</dbReference>
<dbReference type="InterPro" id="IPR039077">
    <property type="entry name" value="SNAP-25_N_SNARE_chord"/>
</dbReference>
<dbReference type="InterPro" id="IPR000727">
    <property type="entry name" value="T_SNARE_dom"/>
</dbReference>
<dbReference type="PANTHER" id="PTHR19305">
    <property type="entry name" value="SYNAPTOSOMAL ASSOCIATED PROTEIN"/>
    <property type="match status" value="1"/>
</dbReference>
<dbReference type="PANTHER" id="PTHR19305:SF14">
    <property type="entry name" value="SYNAPTOSOMAL-ASSOCIATED PROTEIN-RELATED"/>
    <property type="match status" value="1"/>
</dbReference>
<dbReference type="Pfam" id="PF00835">
    <property type="entry name" value="SNAP-25"/>
    <property type="match status" value="1"/>
</dbReference>
<dbReference type="SMART" id="SM00397">
    <property type="entry name" value="t_SNARE"/>
    <property type="match status" value="2"/>
</dbReference>
<dbReference type="SUPFAM" id="SSF58038">
    <property type="entry name" value="SNARE fusion complex"/>
    <property type="match status" value="2"/>
</dbReference>
<dbReference type="PROSITE" id="PS50192">
    <property type="entry name" value="T_SNARE"/>
    <property type="match status" value="2"/>
</dbReference>
<protein>
    <recommendedName>
        <fullName>Synaptosomal-associated protein 25</fullName>
        <shortName>SNAP-25</shortName>
    </recommendedName>
    <alternativeName>
        <fullName>Synaptosomal-associated 25 kDa protein</fullName>
    </alternativeName>
</protein>
<keyword id="KW-1003">Cell membrane</keyword>
<keyword id="KW-0175">Coiled coil</keyword>
<keyword id="KW-0472">Membrane</keyword>
<keyword id="KW-0677">Repeat</keyword>
<keyword id="KW-0770">Synapse</keyword>
<keyword id="KW-0771">Synaptosome</keyword>
<accession>P36976</accession>
<name>SNP25_TORMA</name>
<sequence length="210" mass="23653">MENSVENSMDPRSEQEEMQRCADQITDESLESTRRMLQLVEESKDAGIRTLVMLDEQGEQLERIEEGMDQINKDMKEAEKNLSDLGKCCGLCSCPCNKLKNFEAGGAYKKVWGNNQDGVVASQPARVMDDREQMAMSGGYIRRITDDARENEMEENLDQVGSIIGNLRHMALDMSNEIGSQNAQIDRIVVKGDMNKARIDEANKHATKML</sequence>
<comment type="function">
    <text>May play an important role in the synaptic function of specific neuronal systems. Associates with proteins involved in vesicle docking and membrane fusion.</text>
</comment>
<comment type="subcellular location">
    <subcellularLocation>
        <location evidence="1">Synapse</location>
        <location evidence="1">Synaptosome</location>
    </subcellularLocation>
    <subcellularLocation>
        <location evidence="2">Cell membrane</location>
    </subcellularLocation>
    <text>Complexed with macromolecular elements of the nerve terminal.</text>
</comment>
<comment type="similarity">
    <text evidence="5">Belongs to the SNAP-25 family.</text>
</comment>
<gene>
    <name type="primary">snap25</name>
</gene>
<proteinExistence type="evidence at transcript level"/>
<evidence type="ECO:0000250" key="1"/>
<evidence type="ECO:0000250" key="2">
    <source>
        <dbReference type="UniProtKB" id="P60881"/>
    </source>
</evidence>
<evidence type="ECO:0000255" key="3">
    <source>
        <dbReference type="PROSITE-ProRule" id="PRU00202"/>
    </source>
</evidence>
<evidence type="ECO:0000256" key="4">
    <source>
        <dbReference type="SAM" id="MobiDB-lite"/>
    </source>
</evidence>
<evidence type="ECO:0000305" key="5"/>
<organism>
    <name type="scientific">Torpedo marmorata</name>
    <name type="common">Marbled electric ray</name>
    <dbReference type="NCBI Taxonomy" id="7788"/>
    <lineage>
        <taxon>Eukaryota</taxon>
        <taxon>Metazoa</taxon>
        <taxon>Chordata</taxon>
        <taxon>Craniata</taxon>
        <taxon>Vertebrata</taxon>
        <taxon>Chondrichthyes</taxon>
        <taxon>Elasmobranchii</taxon>
        <taxon>Batoidea</taxon>
        <taxon>Torpediniformes</taxon>
        <taxon>Torpedinidae</taxon>
        <taxon>Torpedo</taxon>
    </lineage>
</organism>
<feature type="chain" id="PRO_0000213595" description="Synaptosomal-associated protein 25">
    <location>
        <begin position="1"/>
        <end position="210"/>
    </location>
</feature>
<feature type="domain" description="t-SNARE coiled-coil homology 1" evidence="3">
    <location>
        <begin position="23"/>
        <end position="85"/>
    </location>
</feature>
<feature type="domain" description="t-SNARE coiled-coil homology 2" evidence="3">
    <location>
        <begin position="147"/>
        <end position="209"/>
    </location>
</feature>
<feature type="region of interest" description="Disordered" evidence="4">
    <location>
        <begin position="1"/>
        <end position="23"/>
    </location>
</feature>
<feature type="compositionally biased region" description="Basic and acidic residues" evidence="4">
    <location>
        <begin position="9"/>
        <end position="20"/>
    </location>
</feature>
<reference key="1">
    <citation type="journal article" date="1993" name="J. Biol. Chem.">
        <title>Evolutionary conservation of synaptosome-associated protein 25 kDa (SNAP-25) shown by Drosophila and Torpedo cDNA clones.</title>
        <authorList>
            <person name="Risinger C."/>
            <person name="Blomqvist A.G."/>
            <person name="Lundell I."/>
            <person name="Lambertsson A."/>
            <person name="Nassel D."/>
            <person name="Pieribone V.A."/>
            <person name="Brodin L."/>
            <person name="Larhammar D."/>
        </authorList>
    </citation>
    <scope>NUCLEOTIDE SEQUENCE [MRNA]</scope>
    <source>
        <tissue>Electric lobe</tissue>
    </source>
</reference>